<dbReference type="EC" id="2.4.2.22" evidence="1"/>
<dbReference type="EMBL" id="FM204884">
    <property type="protein sequence ID" value="CAW99192.1"/>
    <property type="molecule type" value="Genomic_DNA"/>
</dbReference>
<dbReference type="SMR" id="C0MF03"/>
<dbReference type="KEGG" id="seq:SZO_09300"/>
<dbReference type="PATRIC" id="fig|40041.11.peg.987"/>
<dbReference type="eggNOG" id="COG0503">
    <property type="taxonomic scope" value="Bacteria"/>
</dbReference>
<dbReference type="HOGENOM" id="CLU_099015_0_0_9"/>
<dbReference type="UniPathway" id="UPA00602">
    <property type="reaction ID" value="UER00658"/>
</dbReference>
<dbReference type="Proteomes" id="UP000001368">
    <property type="component" value="Chromosome"/>
</dbReference>
<dbReference type="GO" id="GO:0005737">
    <property type="term" value="C:cytoplasm"/>
    <property type="evidence" value="ECO:0007669"/>
    <property type="project" value="UniProtKB-SubCell"/>
</dbReference>
<dbReference type="GO" id="GO:0000310">
    <property type="term" value="F:xanthine phosphoribosyltransferase activity"/>
    <property type="evidence" value="ECO:0007669"/>
    <property type="project" value="UniProtKB-UniRule"/>
</dbReference>
<dbReference type="GO" id="GO:0006166">
    <property type="term" value="P:purine ribonucleoside salvage"/>
    <property type="evidence" value="ECO:0007669"/>
    <property type="project" value="UniProtKB-KW"/>
</dbReference>
<dbReference type="GO" id="GO:0046110">
    <property type="term" value="P:xanthine metabolic process"/>
    <property type="evidence" value="ECO:0007669"/>
    <property type="project" value="InterPro"/>
</dbReference>
<dbReference type="GO" id="GO:0032265">
    <property type="term" value="P:XMP salvage"/>
    <property type="evidence" value="ECO:0007669"/>
    <property type="project" value="UniProtKB-UniRule"/>
</dbReference>
<dbReference type="CDD" id="cd06223">
    <property type="entry name" value="PRTases_typeI"/>
    <property type="match status" value="1"/>
</dbReference>
<dbReference type="Gene3D" id="3.40.50.2020">
    <property type="match status" value="1"/>
</dbReference>
<dbReference type="HAMAP" id="MF_01184">
    <property type="entry name" value="XPRTase"/>
    <property type="match status" value="1"/>
</dbReference>
<dbReference type="InterPro" id="IPR000836">
    <property type="entry name" value="PRibTrfase_dom"/>
</dbReference>
<dbReference type="InterPro" id="IPR029057">
    <property type="entry name" value="PRTase-like"/>
</dbReference>
<dbReference type="InterPro" id="IPR050118">
    <property type="entry name" value="Pur/Pyrimidine_PRTase"/>
</dbReference>
<dbReference type="InterPro" id="IPR010079">
    <property type="entry name" value="Xanthine_PRibTrfase"/>
</dbReference>
<dbReference type="NCBIfam" id="NF006671">
    <property type="entry name" value="PRK09219.1"/>
    <property type="match status" value="1"/>
</dbReference>
<dbReference type="NCBIfam" id="TIGR01744">
    <property type="entry name" value="XPRTase"/>
    <property type="match status" value="1"/>
</dbReference>
<dbReference type="PANTHER" id="PTHR43864">
    <property type="entry name" value="HYPOXANTHINE/GUANINE PHOSPHORIBOSYLTRANSFERASE"/>
    <property type="match status" value="1"/>
</dbReference>
<dbReference type="PANTHER" id="PTHR43864:SF1">
    <property type="entry name" value="XANTHINE PHOSPHORIBOSYLTRANSFERASE"/>
    <property type="match status" value="1"/>
</dbReference>
<dbReference type="Pfam" id="PF00156">
    <property type="entry name" value="Pribosyltran"/>
    <property type="match status" value="1"/>
</dbReference>
<dbReference type="SUPFAM" id="SSF53271">
    <property type="entry name" value="PRTase-like"/>
    <property type="match status" value="1"/>
</dbReference>
<feature type="chain" id="PRO_1000213771" description="Xanthine phosphoribosyltransferase">
    <location>
        <begin position="1"/>
        <end position="193"/>
    </location>
</feature>
<feature type="binding site" evidence="1">
    <location>
        <position position="20"/>
    </location>
    <ligand>
        <name>xanthine</name>
        <dbReference type="ChEBI" id="CHEBI:17712"/>
    </ligand>
</feature>
<feature type="binding site" evidence="1">
    <location>
        <position position="27"/>
    </location>
    <ligand>
        <name>xanthine</name>
        <dbReference type="ChEBI" id="CHEBI:17712"/>
    </ligand>
</feature>
<feature type="binding site" evidence="1">
    <location>
        <begin position="128"/>
        <end position="132"/>
    </location>
    <ligand>
        <name>5-phospho-alpha-D-ribose 1-diphosphate</name>
        <dbReference type="ChEBI" id="CHEBI:58017"/>
    </ligand>
</feature>
<feature type="binding site" evidence="1">
    <location>
        <position position="156"/>
    </location>
    <ligand>
        <name>xanthine</name>
        <dbReference type="ChEBI" id="CHEBI:17712"/>
    </ligand>
</feature>
<organism>
    <name type="scientific">Streptococcus equi subsp. zooepidemicus (strain H70)</name>
    <dbReference type="NCBI Taxonomy" id="553483"/>
    <lineage>
        <taxon>Bacteria</taxon>
        <taxon>Bacillati</taxon>
        <taxon>Bacillota</taxon>
        <taxon>Bacilli</taxon>
        <taxon>Lactobacillales</taxon>
        <taxon>Streptococcaceae</taxon>
        <taxon>Streptococcus</taxon>
    </lineage>
</organism>
<gene>
    <name evidence="1" type="primary">xpt</name>
    <name type="ordered locus">SZO_09300</name>
</gene>
<name>XPT_STRS7</name>
<reference key="1">
    <citation type="journal article" date="2009" name="PLoS Pathog.">
        <title>Genomic evidence for the evolution of Streptococcus equi: host restriction, increased virulence, and genetic exchange with human pathogens.</title>
        <authorList>
            <person name="Holden M.T.G."/>
            <person name="Heather Z."/>
            <person name="Paillot R."/>
            <person name="Steward K.F."/>
            <person name="Webb K."/>
            <person name="Ainslie F."/>
            <person name="Jourdan T."/>
            <person name="Bason N.C."/>
            <person name="Holroyd N.E."/>
            <person name="Mungall K."/>
            <person name="Quail M.A."/>
            <person name="Sanders M."/>
            <person name="Simmonds M."/>
            <person name="Willey D."/>
            <person name="Brooks K."/>
            <person name="Aanensen D.M."/>
            <person name="Spratt B.G."/>
            <person name="Jolley K.A."/>
            <person name="Maiden M.C.J."/>
            <person name="Kehoe M."/>
            <person name="Chanter N."/>
            <person name="Bentley S.D."/>
            <person name="Robinson C."/>
            <person name="Maskell D.J."/>
            <person name="Parkhill J."/>
            <person name="Waller A.S."/>
        </authorList>
    </citation>
    <scope>NUCLEOTIDE SEQUENCE [LARGE SCALE GENOMIC DNA]</scope>
    <source>
        <strain>H70</strain>
    </source>
</reference>
<comment type="function">
    <text evidence="1">Converts the preformed base xanthine, a product of nucleic acid breakdown, to xanthosine 5'-monophosphate (XMP), so it can be reused for RNA or DNA synthesis.</text>
</comment>
<comment type="catalytic activity">
    <reaction evidence="1">
        <text>XMP + diphosphate = xanthine + 5-phospho-alpha-D-ribose 1-diphosphate</text>
        <dbReference type="Rhea" id="RHEA:10800"/>
        <dbReference type="ChEBI" id="CHEBI:17712"/>
        <dbReference type="ChEBI" id="CHEBI:33019"/>
        <dbReference type="ChEBI" id="CHEBI:57464"/>
        <dbReference type="ChEBI" id="CHEBI:58017"/>
        <dbReference type="EC" id="2.4.2.22"/>
    </reaction>
</comment>
<comment type="pathway">
    <text evidence="1">Purine metabolism; XMP biosynthesis via salvage pathway; XMP from xanthine: step 1/1.</text>
</comment>
<comment type="subunit">
    <text evidence="1">Homodimer.</text>
</comment>
<comment type="subcellular location">
    <subcellularLocation>
        <location evidence="1">Cytoplasm</location>
    </subcellularLocation>
</comment>
<comment type="similarity">
    <text evidence="1">Belongs to the purine/pyrimidine phosphoribosyltransferase family. Xpt subfamily.</text>
</comment>
<protein>
    <recommendedName>
        <fullName evidence="1">Xanthine phosphoribosyltransferase</fullName>
        <shortName evidence="1">XPRTase</shortName>
        <ecNumber evidence="1">2.4.2.22</ecNumber>
    </recommendedName>
</protein>
<accession>C0MF03</accession>
<keyword id="KW-0963">Cytoplasm</keyword>
<keyword id="KW-0328">Glycosyltransferase</keyword>
<keyword id="KW-0660">Purine salvage</keyword>
<keyword id="KW-0808">Transferase</keyword>
<evidence type="ECO:0000255" key="1">
    <source>
        <dbReference type="HAMAP-Rule" id="MF_01184"/>
    </source>
</evidence>
<sequence>MRLLEERILAEGTVLGETILKVDQFLTHQVDYRLMKEIGRVFADQYADLGITKVVTIEASGIAPAVYTAEALEVPMIFAKKHKNITMTEGILTAEVYSFTKQVTSTVSIAGGLLSKEDRVLIIDDFLANGQAAKGLIDIIQQAGAKAVGIGIVIEKSFQAGRQLLEDLGVEVTSLARIKHFDNGTVSFLEADA</sequence>
<proteinExistence type="inferred from homology"/>